<feature type="chain" id="PRO_1000025970" description="Photosystem I assembly protein Ycf3">
    <location>
        <begin position="1"/>
        <end position="173"/>
    </location>
</feature>
<feature type="repeat" description="TPR 1">
    <location>
        <begin position="35"/>
        <end position="68"/>
    </location>
</feature>
<feature type="repeat" description="TPR 2">
    <location>
        <begin position="72"/>
        <end position="105"/>
    </location>
</feature>
<feature type="repeat" description="TPR 3">
    <location>
        <begin position="120"/>
        <end position="153"/>
    </location>
</feature>
<keyword id="KW-0472">Membrane</keyword>
<keyword id="KW-0602">Photosynthesis</keyword>
<keyword id="KW-0677">Repeat</keyword>
<keyword id="KW-0793">Thylakoid</keyword>
<keyword id="KW-0802">TPR repeat</keyword>
<evidence type="ECO:0000255" key="1">
    <source>
        <dbReference type="HAMAP-Rule" id="MF_00439"/>
    </source>
</evidence>
<name>YCF3_SYNP6</name>
<comment type="function">
    <text evidence="1">Essential for the assembly of the photosystem I (PSI) complex. May act as a chaperone-like factor to guide the assembly of the PSI subunits.</text>
</comment>
<comment type="subcellular location">
    <subcellularLocation>
        <location evidence="1">Cellular thylakoid membrane</location>
        <topology evidence="1">Peripheral membrane protein</topology>
    </subcellularLocation>
</comment>
<comment type="similarity">
    <text evidence="1">Belongs to the Ycf3 family.</text>
</comment>
<sequence length="173" mass="19872">MPRTQRNDNFIDKSFTVMADLILKVLPTNKKSKEAFAYYRDGMSAQADGEYAEALENYQEALTLEEDPIDRSFILYNIALVHTSNGDHQTALDHYLQALDLNPKMPQALNNIAVIHHFLGQRSEEAGNDDEAERHYDQAAEYWTQAIRLAPNNYIEAQNWLKTTGRSKVDVYF</sequence>
<dbReference type="EMBL" id="AP008231">
    <property type="protein sequence ID" value="BAD79971.1"/>
    <property type="molecule type" value="Genomic_DNA"/>
</dbReference>
<dbReference type="RefSeq" id="WP_011244091.1">
    <property type="nucleotide sequence ID" value="NZ_CP085785.1"/>
</dbReference>
<dbReference type="SMR" id="Q5N149"/>
<dbReference type="KEGG" id="syc:syc1781_c"/>
<dbReference type="eggNOG" id="COG0457">
    <property type="taxonomic scope" value="Bacteria"/>
</dbReference>
<dbReference type="Proteomes" id="UP000001175">
    <property type="component" value="Chromosome"/>
</dbReference>
<dbReference type="GO" id="GO:0031676">
    <property type="term" value="C:plasma membrane-derived thylakoid membrane"/>
    <property type="evidence" value="ECO:0007669"/>
    <property type="project" value="UniProtKB-SubCell"/>
</dbReference>
<dbReference type="GO" id="GO:0015979">
    <property type="term" value="P:photosynthesis"/>
    <property type="evidence" value="ECO:0007669"/>
    <property type="project" value="UniProtKB-UniRule"/>
</dbReference>
<dbReference type="Gene3D" id="1.25.40.10">
    <property type="entry name" value="Tetratricopeptide repeat domain"/>
    <property type="match status" value="1"/>
</dbReference>
<dbReference type="HAMAP" id="MF_00439">
    <property type="entry name" value="Ycf3"/>
    <property type="match status" value="1"/>
</dbReference>
<dbReference type="InterPro" id="IPR022818">
    <property type="entry name" value="PSI_Ycf3_assembly"/>
</dbReference>
<dbReference type="InterPro" id="IPR011990">
    <property type="entry name" value="TPR-like_helical_dom_sf"/>
</dbReference>
<dbReference type="InterPro" id="IPR019734">
    <property type="entry name" value="TPR_rpt"/>
</dbReference>
<dbReference type="InterPro" id="IPR051685">
    <property type="entry name" value="Ycf3/AcsC/BcsC/TPR_MFPF"/>
</dbReference>
<dbReference type="NCBIfam" id="NF002725">
    <property type="entry name" value="PRK02603.1"/>
    <property type="match status" value="1"/>
</dbReference>
<dbReference type="PANTHER" id="PTHR44943">
    <property type="entry name" value="CELLULOSE SYNTHASE OPERON PROTEIN C"/>
    <property type="match status" value="1"/>
</dbReference>
<dbReference type="PANTHER" id="PTHR44943:SF8">
    <property type="entry name" value="TPR REPEAT-CONTAINING PROTEIN MJ0263"/>
    <property type="match status" value="1"/>
</dbReference>
<dbReference type="Pfam" id="PF13424">
    <property type="entry name" value="TPR_12"/>
    <property type="match status" value="1"/>
</dbReference>
<dbReference type="SMART" id="SM00028">
    <property type="entry name" value="TPR"/>
    <property type="match status" value="3"/>
</dbReference>
<dbReference type="SUPFAM" id="SSF48452">
    <property type="entry name" value="TPR-like"/>
    <property type="match status" value="1"/>
</dbReference>
<dbReference type="PROSITE" id="PS50005">
    <property type="entry name" value="TPR"/>
    <property type="match status" value="3"/>
</dbReference>
<dbReference type="PROSITE" id="PS50293">
    <property type="entry name" value="TPR_REGION"/>
    <property type="match status" value="1"/>
</dbReference>
<reference key="1">
    <citation type="journal article" date="2007" name="Photosyn. Res.">
        <title>Complete nucleotide sequence of the freshwater unicellular cyanobacterium Synechococcus elongatus PCC 6301 chromosome: gene content and organization.</title>
        <authorList>
            <person name="Sugita C."/>
            <person name="Ogata K."/>
            <person name="Shikata M."/>
            <person name="Jikuya H."/>
            <person name="Takano J."/>
            <person name="Furumichi M."/>
            <person name="Kanehisa M."/>
            <person name="Omata T."/>
            <person name="Sugiura M."/>
            <person name="Sugita M."/>
        </authorList>
    </citation>
    <scope>NUCLEOTIDE SEQUENCE [LARGE SCALE GENOMIC DNA]</scope>
    <source>
        <strain>ATCC 27144 / PCC 6301 / SAUG 1402/1</strain>
    </source>
</reference>
<gene>
    <name evidence="1" type="primary">ycf3</name>
    <name type="ordered locus">syc1781_c</name>
</gene>
<protein>
    <recommendedName>
        <fullName evidence="1">Photosystem I assembly protein Ycf3</fullName>
    </recommendedName>
</protein>
<accession>Q5N149</accession>
<proteinExistence type="inferred from homology"/>
<organism>
    <name type="scientific">Synechococcus sp. (strain ATCC 27144 / PCC 6301 / SAUG 1402/1)</name>
    <name type="common">Anacystis nidulans</name>
    <dbReference type="NCBI Taxonomy" id="269084"/>
    <lineage>
        <taxon>Bacteria</taxon>
        <taxon>Bacillati</taxon>
        <taxon>Cyanobacteriota</taxon>
        <taxon>Cyanophyceae</taxon>
        <taxon>Synechococcales</taxon>
        <taxon>Synechococcaceae</taxon>
        <taxon>Synechococcus</taxon>
    </lineage>
</organism>